<evidence type="ECO:0000255" key="1">
    <source>
        <dbReference type="HAMAP-Rule" id="MF_00373"/>
    </source>
</evidence>
<evidence type="ECO:0000256" key="2">
    <source>
        <dbReference type="SAM" id="MobiDB-lite"/>
    </source>
</evidence>
<evidence type="ECO:0000305" key="3"/>
<protein>
    <recommendedName>
        <fullName evidence="1">Large ribosomal subunit protein bL28B</fullName>
    </recommendedName>
    <alternativeName>
        <fullName evidence="3">50S ribosomal protein L28 2</fullName>
    </alternativeName>
</protein>
<proteinExistence type="inferred from homology"/>
<accession>P66149</accession>
<accession>A0A1R3Y025</accession>
<accession>O86357</accession>
<accession>X2BJX7</accession>
<reference key="1">
    <citation type="journal article" date="2003" name="Proc. Natl. Acad. Sci. U.S.A.">
        <title>The complete genome sequence of Mycobacterium bovis.</title>
        <authorList>
            <person name="Garnier T."/>
            <person name="Eiglmeier K."/>
            <person name="Camus J.-C."/>
            <person name="Medina N."/>
            <person name="Mansoor H."/>
            <person name="Pryor M."/>
            <person name="Duthoy S."/>
            <person name="Grondin S."/>
            <person name="Lacroix C."/>
            <person name="Monsempe C."/>
            <person name="Simon S."/>
            <person name="Harris B."/>
            <person name="Atkin R."/>
            <person name="Doggett J."/>
            <person name="Mayes R."/>
            <person name="Keating L."/>
            <person name="Wheeler P.R."/>
            <person name="Parkhill J."/>
            <person name="Barrell B.G."/>
            <person name="Cole S.T."/>
            <person name="Gordon S.V."/>
            <person name="Hewinson R.G."/>
        </authorList>
    </citation>
    <scope>NUCLEOTIDE SEQUENCE [LARGE SCALE GENOMIC DNA]</scope>
    <source>
        <strain>ATCC BAA-935 / AF2122/97</strain>
    </source>
</reference>
<reference key="2">
    <citation type="journal article" date="2017" name="Genome Announc.">
        <title>Updated reference genome sequence and annotation of Mycobacterium bovis AF2122/97.</title>
        <authorList>
            <person name="Malone K.M."/>
            <person name="Farrell D."/>
            <person name="Stuber T.P."/>
            <person name="Schubert O.T."/>
            <person name="Aebersold R."/>
            <person name="Robbe-Austerman S."/>
            <person name="Gordon S.V."/>
        </authorList>
    </citation>
    <scope>NUCLEOTIDE SEQUENCE [LARGE SCALE GENOMIC DNA]</scope>
    <scope>GENOME REANNOTATION</scope>
    <source>
        <strain>ATCC BAA-935 / AF2122/97</strain>
    </source>
</reference>
<gene>
    <name type="primary">rpmB2</name>
    <name type="ordered locus">BQ2027_MB2084C</name>
</gene>
<dbReference type="EMBL" id="LT708304">
    <property type="protein sequence ID" value="SIU00691.1"/>
    <property type="molecule type" value="Genomic_DNA"/>
</dbReference>
<dbReference type="RefSeq" id="NP_855734.1">
    <property type="nucleotide sequence ID" value="NC_002945.3"/>
</dbReference>
<dbReference type="SMR" id="P66149"/>
<dbReference type="KEGG" id="mbo:BQ2027_MB2084C"/>
<dbReference type="PATRIC" id="fig|233413.5.peg.2291"/>
<dbReference type="Proteomes" id="UP000001419">
    <property type="component" value="Chromosome"/>
</dbReference>
<dbReference type="GO" id="GO:1990904">
    <property type="term" value="C:ribonucleoprotein complex"/>
    <property type="evidence" value="ECO:0007669"/>
    <property type="project" value="UniProtKB-KW"/>
</dbReference>
<dbReference type="GO" id="GO:0005840">
    <property type="term" value="C:ribosome"/>
    <property type="evidence" value="ECO:0007669"/>
    <property type="project" value="UniProtKB-KW"/>
</dbReference>
<dbReference type="GO" id="GO:0003735">
    <property type="term" value="F:structural constituent of ribosome"/>
    <property type="evidence" value="ECO:0007669"/>
    <property type="project" value="InterPro"/>
</dbReference>
<dbReference type="GO" id="GO:0006412">
    <property type="term" value="P:translation"/>
    <property type="evidence" value="ECO:0007669"/>
    <property type="project" value="UniProtKB-UniRule"/>
</dbReference>
<dbReference type="FunFam" id="2.30.170.40:FF:000001">
    <property type="entry name" value="50S ribosomal protein L28"/>
    <property type="match status" value="1"/>
</dbReference>
<dbReference type="Gene3D" id="2.30.170.40">
    <property type="entry name" value="Ribosomal protein L28/L24"/>
    <property type="match status" value="1"/>
</dbReference>
<dbReference type="HAMAP" id="MF_00373">
    <property type="entry name" value="Ribosomal_bL28"/>
    <property type="match status" value="1"/>
</dbReference>
<dbReference type="InterPro" id="IPR026569">
    <property type="entry name" value="Ribosomal_bL28"/>
</dbReference>
<dbReference type="InterPro" id="IPR034704">
    <property type="entry name" value="Ribosomal_bL28/bL31-like_sf"/>
</dbReference>
<dbReference type="InterPro" id="IPR001383">
    <property type="entry name" value="Ribosomal_bL28_bact-type"/>
</dbReference>
<dbReference type="InterPro" id="IPR037147">
    <property type="entry name" value="Ribosomal_bL28_sf"/>
</dbReference>
<dbReference type="NCBIfam" id="TIGR00009">
    <property type="entry name" value="L28"/>
    <property type="match status" value="1"/>
</dbReference>
<dbReference type="PANTHER" id="PTHR13528">
    <property type="entry name" value="39S RIBOSOMAL PROTEIN L28, MITOCHONDRIAL"/>
    <property type="match status" value="1"/>
</dbReference>
<dbReference type="PANTHER" id="PTHR13528:SF2">
    <property type="entry name" value="LARGE RIBOSOMAL SUBUNIT PROTEIN BL28M"/>
    <property type="match status" value="1"/>
</dbReference>
<dbReference type="Pfam" id="PF00830">
    <property type="entry name" value="Ribosomal_L28"/>
    <property type="match status" value="1"/>
</dbReference>
<dbReference type="SUPFAM" id="SSF143800">
    <property type="entry name" value="L28p-like"/>
    <property type="match status" value="1"/>
</dbReference>
<name>RL28B_MYCBO</name>
<keyword id="KW-1185">Reference proteome</keyword>
<keyword id="KW-0687">Ribonucleoprotein</keyword>
<keyword id="KW-0689">Ribosomal protein</keyword>
<sequence length="78" mass="9095">MSAHCQVTGRKPGFGNTVSHSHRRSRRRWSPNIQQRTYYLPSEGRRIRLRVSTKGIKVIDRDGIEAVVARLRRQGQRI</sequence>
<feature type="chain" id="PRO_0000178502" description="Large ribosomal subunit protein bL28B">
    <location>
        <begin position="1"/>
        <end position="78"/>
    </location>
</feature>
<feature type="region of interest" description="Disordered" evidence="2">
    <location>
        <begin position="1"/>
        <end position="29"/>
    </location>
</feature>
<feature type="compositionally biased region" description="Basic residues" evidence="2">
    <location>
        <begin position="20"/>
        <end position="29"/>
    </location>
</feature>
<organism>
    <name type="scientific">Mycobacterium bovis (strain ATCC BAA-935 / AF2122/97)</name>
    <dbReference type="NCBI Taxonomy" id="233413"/>
    <lineage>
        <taxon>Bacteria</taxon>
        <taxon>Bacillati</taxon>
        <taxon>Actinomycetota</taxon>
        <taxon>Actinomycetes</taxon>
        <taxon>Mycobacteriales</taxon>
        <taxon>Mycobacteriaceae</taxon>
        <taxon>Mycobacterium</taxon>
        <taxon>Mycobacterium tuberculosis complex</taxon>
    </lineage>
</organism>
<comment type="similarity">
    <text evidence="1">Belongs to the bacterial ribosomal protein bL28 family.</text>
</comment>